<organism>
    <name type="scientific">Wolbachia sp. subsp. Drosophila simulans (strain wRi)</name>
    <dbReference type="NCBI Taxonomy" id="66084"/>
    <lineage>
        <taxon>Bacteria</taxon>
        <taxon>Pseudomonadati</taxon>
        <taxon>Pseudomonadota</taxon>
        <taxon>Alphaproteobacteria</taxon>
        <taxon>Rickettsiales</taxon>
        <taxon>Anaplasmataceae</taxon>
        <taxon>Wolbachieae</taxon>
        <taxon>Wolbachia</taxon>
    </lineage>
</organism>
<evidence type="ECO:0000255" key="1">
    <source>
        <dbReference type="HAMAP-Rule" id="MF_01576"/>
    </source>
</evidence>
<comment type="function">
    <text evidence="1">Catalyzes the oxidation of 5,10-methylenetetrahydrofolate to 5,10-methenyltetrahydrofolate and then the hydrolysis of 5,10-methenyltetrahydrofolate to 10-formyltetrahydrofolate.</text>
</comment>
<comment type="catalytic activity">
    <reaction evidence="1">
        <text>(6R)-5,10-methylene-5,6,7,8-tetrahydrofolate + NADP(+) = (6R)-5,10-methenyltetrahydrofolate + NADPH</text>
        <dbReference type="Rhea" id="RHEA:22812"/>
        <dbReference type="ChEBI" id="CHEBI:15636"/>
        <dbReference type="ChEBI" id="CHEBI:57455"/>
        <dbReference type="ChEBI" id="CHEBI:57783"/>
        <dbReference type="ChEBI" id="CHEBI:58349"/>
        <dbReference type="EC" id="1.5.1.5"/>
    </reaction>
</comment>
<comment type="catalytic activity">
    <reaction evidence="1">
        <text>(6R)-5,10-methenyltetrahydrofolate + H2O = (6R)-10-formyltetrahydrofolate + H(+)</text>
        <dbReference type="Rhea" id="RHEA:23700"/>
        <dbReference type="ChEBI" id="CHEBI:15377"/>
        <dbReference type="ChEBI" id="CHEBI:15378"/>
        <dbReference type="ChEBI" id="CHEBI:57455"/>
        <dbReference type="ChEBI" id="CHEBI:195366"/>
        <dbReference type="EC" id="3.5.4.9"/>
    </reaction>
</comment>
<comment type="pathway">
    <text evidence="1">One-carbon metabolism; tetrahydrofolate interconversion.</text>
</comment>
<comment type="subunit">
    <text evidence="1">Homodimer.</text>
</comment>
<comment type="similarity">
    <text evidence="1">Belongs to the tetrahydrofolate dehydrogenase/cyclohydrolase family.</text>
</comment>
<proteinExistence type="inferred from homology"/>
<gene>
    <name evidence="1" type="primary">folD</name>
    <name type="ordered locus">WRi_003750</name>
</gene>
<dbReference type="EC" id="1.5.1.5" evidence="1"/>
<dbReference type="EC" id="3.5.4.9" evidence="1"/>
<dbReference type="EMBL" id="CP001391">
    <property type="protein sequence ID" value="ACN95179.1"/>
    <property type="molecule type" value="Genomic_DNA"/>
</dbReference>
<dbReference type="RefSeq" id="WP_006280244.1">
    <property type="nucleotide sequence ID" value="NZ_MKIF01000175.1"/>
</dbReference>
<dbReference type="SMR" id="C0R2N7"/>
<dbReference type="STRING" id="66084.WRi_003750"/>
<dbReference type="KEGG" id="wri:WRi_003750"/>
<dbReference type="HOGENOM" id="CLU_034045_2_1_5"/>
<dbReference type="UniPathway" id="UPA00193"/>
<dbReference type="Proteomes" id="UP000001293">
    <property type="component" value="Chromosome"/>
</dbReference>
<dbReference type="GO" id="GO:0005829">
    <property type="term" value="C:cytosol"/>
    <property type="evidence" value="ECO:0007669"/>
    <property type="project" value="TreeGrafter"/>
</dbReference>
<dbReference type="GO" id="GO:0004477">
    <property type="term" value="F:methenyltetrahydrofolate cyclohydrolase activity"/>
    <property type="evidence" value="ECO:0007669"/>
    <property type="project" value="UniProtKB-UniRule"/>
</dbReference>
<dbReference type="GO" id="GO:0004488">
    <property type="term" value="F:methylenetetrahydrofolate dehydrogenase (NADP+) activity"/>
    <property type="evidence" value="ECO:0007669"/>
    <property type="project" value="UniProtKB-UniRule"/>
</dbReference>
<dbReference type="GO" id="GO:0000105">
    <property type="term" value="P:L-histidine biosynthetic process"/>
    <property type="evidence" value="ECO:0007669"/>
    <property type="project" value="UniProtKB-KW"/>
</dbReference>
<dbReference type="GO" id="GO:0009086">
    <property type="term" value="P:methionine biosynthetic process"/>
    <property type="evidence" value="ECO:0007669"/>
    <property type="project" value="UniProtKB-KW"/>
</dbReference>
<dbReference type="GO" id="GO:0006164">
    <property type="term" value="P:purine nucleotide biosynthetic process"/>
    <property type="evidence" value="ECO:0007669"/>
    <property type="project" value="UniProtKB-KW"/>
</dbReference>
<dbReference type="GO" id="GO:0035999">
    <property type="term" value="P:tetrahydrofolate interconversion"/>
    <property type="evidence" value="ECO:0007669"/>
    <property type="project" value="UniProtKB-UniRule"/>
</dbReference>
<dbReference type="CDD" id="cd01080">
    <property type="entry name" value="NAD_bind_m-THF_DH_Cyclohyd"/>
    <property type="match status" value="1"/>
</dbReference>
<dbReference type="FunFam" id="3.40.50.720:FF:000094">
    <property type="entry name" value="Bifunctional protein FolD"/>
    <property type="match status" value="1"/>
</dbReference>
<dbReference type="FunFam" id="3.40.50.10860:FF:000005">
    <property type="entry name" value="C-1-tetrahydrofolate synthase, cytoplasmic, putative"/>
    <property type="match status" value="1"/>
</dbReference>
<dbReference type="Gene3D" id="3.40.50.10860">
    <property type="entry name" value="Leucine Dehydrogenase, chain A, domain 1"/>
    <property type="match status" value="1"/>
</dbReference>
<dbReference type="Gene3D" id="3.40.50.720">
    <property type="entry name" value="NAD(P)-binding Rossmann-like Domain"/>
    <property type="match status" value="1"/>
</dbReference>
<dbReference type="HAMAP" id="MF_01576">
    <property type="entry name" value="THF_DHG_CYH"/>
    <property type="match status" value="1"/>
</dbReference>
<dbReference type="InterPro" id="IPR046346">
    <property type="entry name" value="Aminoacid_DH-like_N_sf"/>
</dbReference>
<dbReference type="InterPro" id="IPR036291">
    <property type="entry name" value="NAD(P)-bd_dom_sf"/>
</dbReference>
<dbReference type="InterPro" id="IPR000672">
    <property type="entry name" value="THF_DH/CycHdrlase"/>
</dbReference>
<dbReference type="InterPro" id="IPR020630">
    <property type="entry name" value="THF_DH/CycHdrlase_cat_dom"/>
</dbReference>
<dbReference type="InterPro" id="IPR020867">
    <property type="entry name" value="THF_DH/CycHdrlase_CS"/>
</dbReference>
<dbReference type="InterPro" id="IPR020631">
    <property type="entry name" value="THF_DH/CycHdrlase_NAD-bd_dom"/>
</dbReference>
<dbReference type="NCBIfam" id="NF008058">
    <property type="entry name" value="PRK10792.1"/>
    <property type="match status" value="1"/>
</dbReference>
<dbReference type="NCBIfam" id="NF010784">
    <property type="entry name" value="PRK14187.1"/>
    <property type="match status" value="1"/>
</dbReference>
<dbReference type="NCBIfam" id="NF010785">
    <property type="entry name" value="PRK14188.1"/>
    <property type="match status" value="1"/>
</dbReference>
<dbReference type="PANTHER" id="PTHR48099:SF5">
    <property type="entry name" value="C-1-TETRAHYDROFOLATE SYNTHASE, CYTOPLASMIC"/>
    <property type="match status" value="1"/>
</dbReference>
<dbReference type="PANTHER" id="PTHR48099">
    <property type="entry name" value="C-1-TETRAHYDROFOLATE SYNTHASE, CYTOPLASMIC-RELATED"/>
    <property type="match status" value="1"/>
</dbReference>
<dbReference type="Pfam" id="PF00763">
    <property type="entry name" value="THF_DHG_CYH"/>
    <property type="match status" value="1"/>
</dbReference>
<dbReference type="Pfam" id="PF02882">
    <property type="entry name" value="THF_DHG_CYH_C"/>
    <property type="match status" value="1"/>
</dbReference>
<dbReference type="PRINTS" id="PR00085">
    <property type="entry name" value="THFDHDRGNASE"/>
</dbReference>
<dbReference type="SUPFAM" id="SSF53223">
    <property type="entry name" value="Aminoacid dehydrogenase-like, N-terminal domain"/>
    <property type="match status" value="1"/>
</dbReference>
<dbReference type="SUPFAM" id="SSF51735">
    <property type="entry name" value="NAD(P)-binding Rossmann-fold domains"/>
    <property type="match status" value="1"/>
</dbReference>
<dbReference type="PROSITE" id="PS00766">
    <property type="entry name" value="THF_DHG_CYH_1"/>
    <property type="match status" value="1"/>
</dbReference>
<dbReference type="PROSITE" id="PS00767">
    <property type="entry name" value="THF_DHG_CYH_2"/>
    <property type="match status" value="1"/>
</dbReference>
<keyword id="KW-0028">Amino-acid biosynthesis</keyword>
<keyword id="KW-0368">Histidine biosynthesis</keyword>
<keyword id="KW-0378">Hydrolase</keyword>
<keyword id="KW-0486">Methionine biosynthesis</keyword>
<keyword id="KW-0511">Multifunctional enzyme</keyword>
<keyword id="KW-0521">NADP</keyword>
<keyword id="KW-0554">One-carbon metabolism</keyword>
<keyword id="KW-0560">Oxidoreductase</keyword>
<keyword id="KW-0658">Purine biosynthesis</keyword>
<reference key="1">
    <citation type="journal article" date="2009" name="Proc. Natl. Acad. Sci. U.S.A.">
        <title>The mosaic genome structure of the Wolbachia wRi strain infecting Drosophila simulans.</title>
        <authorList>
            <person name="Klasson L."/>
            <person name="Westberg J."/>
            <person name="Sapountzis P."/>
            <person name="Naeslund K."/>
            <person name="Lutnaes Y."/>
            <person name="Darby A.C."/>
            <person name="Veneti Z."/>
            <person name="Chen L."/>
            <person name="Braig H.R."/>
            <person name="Garrett R."/>
            <person name="Bourtzis K."/>
            <person name="Andersson S.G."/>
        </authorList>
    </citation>
    <scope>NUCLEOTIDE SEQUENCE [LARGE SCALE GENOMIC DNA]</scope>
    <source>
        <strain>wRi</strain>
    </source>
</reference>
<sequence>MTIIIDGKKIANDLCERLSQKIDILKREYNIFPCLKVILVGSNPASQVYVRNKQKKAESIGISSETIVLPDNISEDELIEKINELNEDPSVHGILVQLPLPNHISASRVINTVSVEKDVDGFHDENVGKLVKGEKNCLIPCTPKGSLHLIKSIEENLSGKNAVVIGRSNIVGKPMFYLLLQENCTVTILHSQSKDLAEYCSKADIVVAAVGKPNFVQADWIKKGAIVIDVGINSVNVGKLVGDVDFEGIKGKAKAMTPVPGGVGPMTIAFLMMNTVIAACLQKGVDASNFIS</sequence>
<name>FOLD_WOLWR</name>
<accession>C0R2N7</accession>
<feature type="chain" id="PRO_1000185633" description="Bifunctional protein FolD">
    <location>
        <begin position="1"/>
        <end position="292"/>
    </location>
</feature>
<feature type="binding site" evidence="1">
    <location>
        <begin position="166"/>
        <end position="168"/>
    </location>
    <ligand>
        <name>NADP(+)</name>
        <dbReference type="ChEBI" id="CHEBI:58349"/>
    </ligand>
</feature>
<feature type="binding site" evidence="1">
    <location>
        <position position="191"/>
    </location>
    <ligand>
        <name>NADP(+)</name>
        <dbReference type="ChEBI" id="CHEBI:58349"/>
    </ligand>
</feature>
<feature type="binding site" evidence="1">
    <location>
        <position position="232"/>
    </location>
    <ligand>
        <name>NADP(+)</name>
        <dbReference type="ChEBI" id="CHEBI:58349"/>
    </ligand>
</feature>
<protein>
    <recommendedName>
        <fullName evidence="1">Bifunctional protein FolD</fullName>
    </recommendedName>
    <domain>
        <recommendedName>
            <fullName evidence="1">Methylenetetrahydrofolate dehydrogenase</fullName>
            <ecNumber evidence="1">1.5.1.5</ecNumber>
        </recommendedName>
    </domain>
    <domain>
        <recommendedName>
            <fullName evidence="1">Methenyltetrahydrofolate cyclohydrolase</fullName>
            <ecNumber evidence="1">3.5.4.9</ecNumber>
        </recommendedName>
    </domain>
</protein>